<organism>
    <name type="scientific">Rickettsia conorii (strain ATCC VR-613 / Malish 7)</name>
    <dbReference type="NCBI Taxonomy" id="272944"/>
    <lineage>
        <taxon>Bacteria</taxon>
        <taxon>Pseudomonadati</taxon>
        <taxon>Pseudomonadota</taxon>
        <taxon>Alphaproteobacteria</taxon>
        <taxon>Rickettsiales</taxon>
        <taxon>Rickettsiaceae</taxon>
        <taxon>Rickettsieae</taxon>
        <taxon>Rickettsia</taxon>
        <taxon>spotted fever group</taxon>
    </lineage>
</organism>
<proteinExistence type="predicted"/>
<protein>
    <recommendedName>
        <fullName>Uncharacterized protein RC0091</fullName>
    </recommendedName>
</protein>
<name>Y091_RICCN</name>
<accession>Q92JH6</accession>
<reference key="1">
    <citation type="journal article" date="2001" name="Science">
        <title>Mechanisms of evolution in Rickettsia conorii and R. prowazekii.</title>
        <authorList>
            <person name="Ogata H."/>
            <person name="Audic S."/>
            <person name="Renesto-Audiffren P."/>
            <person name="Fournier P.-E."/>
            <person name="Barbe V."/>
            <person name="Samson D."/>
            <person name="Roux V."/>
            <person name="Cossart P."/>
            <person name="Weissenbach J."/>
            <person name="Claverie J.-M."/>
            <person name="Raoult D."/>
        </authorList>
    </citation>
    <scope>NUCLEOTIDE SEQUENCE [LARGE SCALE GENOMIC DNA]</scope>
    <source>
        <strain>ATCC VR-613 / Malish 7</strain>
    </source>
</reference>
<sequence length="179" mass="20808">MLLEAIKYFKVSLSIDPIEECSFILREIFNIPKNKKEVEKYLSLKKDLYISLEEFLFKLNLIPLAAFEYLKAASIASPQEEQKLLLKVHKVYSTEMEENTVFIRSMLDKGKMEDLSIVTKEADRTKFLSDTQTIINDFVSLPELQAKEWPEVQQNQNEQLTNNQQEVNKCQLIQDIGIG</sequence>
<feature type="chain" id="PRO_0000101450" description="Uncharacterized protein RC0091">
    <location>
        <begin position="1"/>
        <end position="179"/>
    </location>
</feature>
<gene>
    <name type="ordered locus">RC0091</name>
</gene>
<dbReference type="EMBL" id="AE006914">
    <property type="protein sequence ID" value="AAL02629.1"/>
    <property type="molecule type" value="Genomic_DNA"/>
</dbReference>
<dbReference type="PIR" id="C97711">
    <property type="entry name" value="C97711"/>
</dbReference>
<dbReference type="RefSeq" id="WP_010976775.1">
    <property type="nucleotide sequence ID" value="NC_003103.1"/>
</dbReference>
<dbReference type="SMR" id="Q92JH6"/>
<dbReference type="GeneID" id="928103"/>
<dbReference type="KEGG" id="rco:RC0091"/>
<dbReference type="PATRIC" id="fig|272944.4.peg.108"/>
<dbReference type="HOGENOM" id="CLU_1694145_0_0_5"/>
<dbReference type="Proteomes" id="UP000000816">
    <property type="component" value="Chromosome"/>
</dbReference>